<accession>B8NBJ4</accession>
<name>EXGB_ASPFN</name>
<keyword id="KW-0119">Carbohydrate metabolism</keyword>
<keyword id="KW-0961">Cell wall biogenesis/degradation</keyword>
<keyword id="KW-0325">Glycoprotein</keyword>
<keyword id="KW-0326">Glycosidase</keyword>
<keyword id="KW-0378">Hydrolase</keyword>
<keyword id="KW-0624">Polysaccharide degradation</keyword>
<keyword id="KW-0964">Secreted</keyword>
<keyword id="KW-0732">Signal</keyword>
<feature type="signal peptide" evidence="2">
    <location>
        <begin position="1"/>
        <end position="18"/>
    </location>
</feature>
<feature type="chain" id="PRO_0000394706" description="Probable glucan endo-1,6-beta-glucosidase B">
    <location>
        <begin position="19"/>
        <end position="392"/>
    </location>
</feature>
<feature type="active site" description="Proton donor" evidence="1">
    <location>
        <position position="220"/>
    </location>
</feature>
<feature type="active site" description="Nucleophile" evidence="1">
    <location>
        <position position="322"/>
    </location>
</feature>
<feature type="glycosylation site" description="N-linked (GlcNAc...) asparagine" evidence="2">
    <location>
        <position position="31"/>
    </location>
</feature>
<proteinExistence type="inferred from homology"/>
<reference key="1">
    <citation type="journal article" date="2015" name="Genome Announc.">
        <title>Genome sequence of Aspergillus flavus NRRL 3357, a strain that causes aflatoxin contamination of food and feed.</title>
        <authorList>
            <person name="Nierman W.C."/>
            <person name="Yu J."/>
            <person name="Fedorova-Abrams N.D."/>
            <person name="Losada L."/>
            <person name="Cleveland T.E."/>
            <person name="Bhatnagar D."/>
            <person name="Bennett J.W."/>
            <person name="Dean R."/>
            <person name="Payne G.A."/>
        </authorList>
    </citation>
    <scope>NUCLEOTIDE SEQUENCE [LARGE SCALE GENOMIC DNA]</scope>
    <source>
        <strain>ATCC 200026 / FGSC A1120 / IAM 13836 / NRRL 3357 / JCM 12722 / SRRC 167</strain>
    </source>
</reference>
<sequence length="392" mass="45214">MKVTRLAVLNTLATLTVAWLPTTDKTITSSNGTDLFKASHGKIRGVNLGSQFVFEPWIATKAWSELGCEGQESEFDCVMKLGQDAANKAFAKHWDSWITKEDIKEIRSYGLNTIRIPVGYWMNEDLIYHDSEYFPHGGFAYLEKLCGWASDAGLYIIIDLHGAPGAQVAKNAFTGQFADTPGFYVDFQYQRALEFLEWMTIKVHTLHNFRNVGMLEVVNEPVQNPQVTTTLRSNYYPNAFHSIRKVEGALSIDRKDYLHIQMMDGAWGAGDPHEHLTDDYYAAYDNHRYLKWDPRVEVSKDSYIKTSCNDNVATNWPAIIGEWSLGVPDNVQETADWKPYSNLDFYQKWFAAQVQNYEQHQGWIFWTWKTQLDEYRWSYRGTYLSGFWQTSS</sequence>
<evidence type="ECO:0000250" key="1"/>
<evidence type="ECO:0000255" key="2"/>
<evidence type="ECO:0000305" key="3"/>
<organism>
    <name type="scientific">Aspergillus flavus (strain ATCC 200026 / FGSC A1120 / IAM 13836 / NRRL 3357 / JCM 12722 / SRRC 167)</name>
    <dbReference type="NCBI Taxonomy" id="332952"/>
    <lineage>
        <taxon>Eukaryota</taxon>
        <taxon>Fungi</taxon>
        <taxon>Dikarya</taxon>
        <taxon>Ascomycota</taxon>
        <taxon>Pezizomycotina</taxon>
        <taxon>Eurotiomycetes</taxon>
        <taxon>Eurotiomycetidae</taxon>
        <taxon>Eurotiales</taxon>
        <taxon>Aspergillaceae</taxon>
        <taxon>Aspergillus</taxon>
        <taxon>Aspergillus subgen. Circumdati</taxon>
    </lineage>
</organism>
<protein>
    <recommendedName>
        <fullName>Probable glucan endo-1,6-beta-glucosidase B</fullName>
        <ecNumber>3.2.1.75</ecNumber>
    </recommendedName>
    <alternativeName>
        <fullName>Beta-1,6-glucanase B</fullName>
    </alternativeName>
    <alternativeName>
        <fullName>Endo-1,6-beta-D-glucanase B</fullName>
    </alternativeName>
    <alternativeName>
        <fullName>Endo-1,6-beta-glucanase B</fullName>
    </alternativeName>
</protein>
<gene>
    <name type="primary">exgB</name>
    <name type="ORF">AFLA_045690</name>
</gene>
<comment type="function">
    <text evidence="1">Beta-glucanases participate in the metabolism of beta-glucan, the main structural component of the cell wall. Acts on lutean, pustulan and 1,6-oligo-beta-D-glucosides (By similarity).</text>
</comment>
<comment type="catalytic activity">
    <reaction>
        <text>Random hydrolysis of (1-&gt;6)-linkages in (1-&gt;6)-beta-D-glucans.</text>
        <dbReference type="EC" id="3.2.1.75"/>
    </reaction>
</comment>
<comment type="subcellular location">
    <subcellularLocation>
        <location evidence="1">Secreted</location>
    </subcellularLocation>
</comment>
<comment type="similarity">
    <text evidence="3">Belongs to the glycosyl hydrolase 5 (cellulase A) family.</text>
</comment>
<dbReference type="EC" id="3.2.1.75"/>
<dbReference type="EMBL" id="EQ963476">
    <property type="protein sequence ID" value="EED52867.1"/>
    <property type="molecule type" value="Genomic_DNA"/>
</dbReference>
<dbReference type="RefSeq" id="XP_002378031.1">
    <property type="nucleotide sequence ID" value="XM_002377990.1"/>
</dbReference>
<dbReference type="SMR" id="B8NBJ4"/>
<dbReference type="GlyCosmos" id="B8NBJ4">
    <property type="glycosylation" value="1 site, No reported glycans"/>
</dbReference>
<dbReference type="EnsemblFungi" id="EED52867">
    <property type="protein sequence ID" value="EED52867"/>
    <property type="gene ID" value="AFLA_045690"/>
</dbReference>
<dbReference type="VEuPathDB" id="FungiDB:AFLA_008154"/>
<dbReference type="eggNOG" id="ENOG502RBRB">
    <property type="taxonomic scope" value="Eukaryota"/>
</dbReference>
<dbReference type="HOGENOM" id="CLU_004624_7_0_1"/>
<dbReference type="OMA" id="WMLPAEW"/>
<dbReference type="GO" id="GO:0009986">
    <property type="term" value="C:cell surface"/>
    <property type="evidence" value="ECO:0007669"/>
    <property type="project" value="TreeGrafter"/>
</dbReference>
<dbReference type="GO" id="GO:0005576">
    <property type="term" value="C:extracellular region"/>
    <property type="evidence" value="ECO:0007669"/>
    <property type="project" value="UniProtKB-SubCell"/>
</dbReference>
<dbReference type="GO" id="GO:0046557">
    <property type="term" value="F:glucan endo-1,6-beta-glucosidase activity"/>
    <property type="evidence" value="ECO:0007669"/>
    <property type="project" value="UniProtKB-EC"/>
</dbReference>
<dbReference type="GO" id="GO:0004338">
    <property type="term" value="F:glucan exo-1,3-beta-glucosidase activity"/>
    <property type="evidence" value="ECO:0007669"/>
    <property type="project" value="TreeGrafter"/>
</dbReference>
<dbReference type="GO" id="GO:0071555">
    <property type="term" value="P:cell wall organization"/>
    <property type="evidence" value="ECO:0007669"/>
    <property type="project" value="UniProtKB-KW"/>
</dbReference>
<dbReference type="GO" id="GO:0009251">
    <property type="term" value="P:glucan catabolic process"/>
    <property type="evidence" value="ECO:0007669"/>
    <property type="project" value="TreeGrafter"/>
</dbReference>
<dbReference type="FunFam" id="3.20.20.80:FF:000269">
    <property type="entry name" value="Probable glucan endo-1,6-beta-glucosidase B"/>
    <property type="match status" value="1"/>
</dbReference>
<dbReference type="Gene3D" id="3.20.20.80">
    <property type="entry name" value="Glycosidases"/>
    <property type="match status" value="1"/>
</dbReference>
<dbReference type="InterPro" id="IPR001547">
    <property type="entry name" value="Glyco_hydro_5"/>
</dbReference>
<dbReference type="InterPro" id="IPR017853">
    <property type="entry name" value="Glycoside_hydrolase_SF"/>
</dbReference>
<dbReference type="InterPro" id="IPR050386">
    <property type="entry name" value="Glycosyl_hydrolase_5"/>
</dbReference>
<dbReference type="PANTHER" id="PTHR31297">
    <property type="entry name" value="GLUCAN ENDO-1,6-BETA-GLUCOSIDASE B"/>
    <property type="match status" value="1"/>
</dbReference>
<dbReference type="PANTHER" id="PTHR31297:SF39">
    <property type="entry name" value="GLUCAN ENDO-1,6-BETA-GLUCOSIDASE B"/>
    <property type="match status" value="1"/>
</dbReference>
<dbReference type="Pfam" id="PF00150">
    <property type="entry name" value="Cellulase"/>
    <property type="match status" value="1"/>
</dbReference>
<dbReference type="SUPFAM" id="SSF51445">
    <property type="entry name" value="(Trans)glycosidases"/>
    <property type="match status" value="1"/>
</dbReference>